<dbReference type="EMBL" id="D13963">
    <property type="protein sequence ID" value="BAA03066.1"/>
    <property type="molecule type" value="mRNA"/>
</dbReference>
<dbReference type="PIR" id="A46742">
    <property type="entry name" value="A46742"/>
</dbReference>
<dbReference type="RefSeq" id="NP_075209.1">
    <property type="nucleotide sequence ID" value="NM_022920.2"/>
</dbReference>
<dbReference type="RefSeq" id="XP_017452483.1">
    <property type="nucleotide sequence ID" value="XM_017596994.1"/>
</dbReference>
<dbReference type="SMR" id="P35349"/>
<dbReference type="BioGRID" id="246584">
    <property type="interactions" value="4"/>
</dbReference>
<dbReference type="FunCoup" id="P35349">
    <property type="interactions" value="99"/>
</dbReference>
<dbReference type="IntAct" id="P35349">
    <property type="interactions" value="2"/>
</dbReference>
<dbReference type="MINT" id="P35349"/>
<dbReference type="STRING" id="10116.ENSRNOP00000000249"/>
<dbReference type="BindingDB" id="P35349"/>
<dbReference type="ChEMBL" id="CHEMBL3842"/>
<dbReference type="DrugCentral" id="P35349"/>
<dbReference type="GuidetoPHARMACOLOGY" id="294"/>
<dbReference type="GlyCosmos" id="P35349">
    <property type="glycosylation" value="4 sites, No reported glycans"/>
</dbReference>
<dbReference type="GlyGen" id="P35349">
    <property type="glycosylation" value="5 sites"/>
</dbReference>
<dbReference type="PhosphoSitePlus" id="P35349"/>
<dbReference type="PaxDb" id="10116-ENSRNOP00000000249"/>
<dbReference type="Ensembl" id="ENSRNOT00000000249.7">
    <property type="protein sequence ID" value="ENSRNOP00000000249.5"/>
    <property type="gene ID" value="ENSRNOG00000000233.7"/>
</dbReference>
<dbReference type="GeneID" id="24419"/>
<dbReference type="KEGG" id="rno:24419"/>
<dbReference type="UCSC" id="RGD:2747">
    <property type="organism name" value="rat"/>
</dbReference>
<dbReference type="AGR" id="RGD:2747"/>
<dbReference type="CTD" id="2916"/>
<dbReference type="RGD" id="2747">
    <property type="gene designation" value="Grm6"/>
</dbReference>
<dbReference type="eggNOG" id="KOG1056">
    <property type="taxonomic scope" value="Eukaryota"/>
</dbReference>
<dbReference type="GeneTree" id="ENSGT01030000234648"/>
<dbReference type="HOGENOM" id="CLU_005389_0_0_1"/>
<dbReference type="InParanoid" id="P35349"/>
<dbReference type="OMA" id="CCPTPII"/>
<dbReference type="OrthoDB" id="54962at9989"/>
<dbReference type="PhylomeDB" id="P35349"/>
<dbReference type="TreeFam" id="TF313240"/>
<dbReference type="Reactome" id="R-RNO-418594">
    <property type="pathway name" value="G alpha (i) signalling events"/>
</dbReference>
<dbReference type="Reactome" id="R-RNO-420499">
    <property type="pathway name" value="Class C/3 (Metabotropic glutamate/pheromone receptors)"/>
</dbReference>
<dbReference type="PRO" id="PR:P35349"/>
<dbReference type="Proteomes" id="UP000002494">
    <property type="component" value="Chromosome 10"/>
</dbReference>
<dbReference type="Bgee" id="ENSRNOG00000000233">
    <property type="expression patterns" value="Expressed in cerebellum and 1 other cell type or tissue"/>
</dbReference>
<dbReference type="GO" id="GO:0051286">
    <property type="term" value="C:cell tip"/>
    <property type="evidence" value="ECO:0000266"/>
    <property type="project" value="RGD"/>
</dbReference>
<dbReference type="GO" id="GO:0030425">
    <property type="term" value="C:dendrite"/>
    <property type="evidence" value="ECO:0000266"/>
    <property type="project" value="RGD"/>
</dbReference>
<dbReference type="GO" id="GO:0005789">
    <property type="term" value="C:endoplasmic reticulum membrane"/>
    <property type="evidence" value="ECO:0000250"/>
    <property type="project" value="UniProtKB"/>
</dbReference>
<dbReference type="GO" id="GO:0000139">
    <property type="term" value="C:Golgi membrane"/>
    <property type="evidence" value="ECO:0000250"/>
    <property type="project" value="UniProtKB"/>
</dbReference>
<dbReference type="GO" id="GO:0035841">
    <property type="term" value="C:new growing cell tip"/>
    <property type="evidence" value="ECO:0000266"/>
    <property type="project" value="RGD"/>
</dbReference>
<dbReference type="GO" id="GO:0005886">
    <property type="term" value="C:plasma membrane"/>
    <property type="evidence" value="ECO:0000250"/>
    <property type="project" value="UniProtKB"/>
</dbReference>
<dbReference type="GO" id="GO:0001640">
    <property type="term" value="F:adenylate cyclase inhibiting G protein-coupled glutamate receptor activity"/>
    <property type="evidence" value="ECO:0000314"/>
    <property type="project" value="RGD"/>
</dbReference>
<dbReference type="GO" id="GO:0008066">
    <property type="term" value="F:glutamate receptor activity"/>
    <property type="evidence" value="ECO:0000250"/>
    <property type="project" value="UniProtKB"/>
</dbReference>
<dbReference type="GO" id="GO:0042803">
    <property type="term" value="F:protein homodimerization activity"/>
    <property type="evidence" value="ECO:0000266"/>
    <property type="project" value="RGD"/>
</dbReference>
<dbReference type="GO" id="GO:0007196">
    <property type="term" value="P:adenylate cyclase-inhibiting G protein-coupled glutamate receptor signaling pathway"/>
    <property type="evidence" value="ECO:0000314"/>
    <property type="project" value="RGD"/>
</dbReference>
<dbReference type="GO" id="GO:0007268">
    <property type="term" value="P:chemical synaptic transmission"/>
    <property type="evidence" value="ECO:0000270"/>
    <property type="project" value="RGD"/>
</dbReference>
<dbReference type="GO" id="GO:0050908">
    <property type="term" value="P:detection of light stimulus involved in visual perception"/>
    <property type="evidence" value="ECO:0000250"/>
    <property type="project" value="UniProtKB"/>
</dbReference>
<dbReference type="GO" id="GO:0007216">
    <property type="term" value="P:G protein-coupled glutamate receptor signaling pathway"/>
    <property type="evidence" value="ECO:0000250"/>
    <property type="project" value="UniProtKB"/>
</dbReference>
<dbReference type="GO" id="GO:0010467">
    <property type="term" value="P:gene expression"/>
    <property type="evidence" value="ECO:0000266"/>
    <property type="project" value="RGD"/>
</dbReference>
<dbReference type="GO" id="GO:0007626">
    <property type="term" value="P:locomotory behavior"/>
    <property type="evidence" value="ECO:0000266"/>
    <property type="project" value="RGD"/>
</dbReference>
<dbReference type="GO" id="GO:1905665">
    <property type="term" value="P:positive regulation of calcium ion import across plasma membrane"/>
    <property type="evidence" value="ECO:0000250"/>
    <property type="project" value="UniProtKB"/>
</dbReference>
<dbReference type="GO" id="GO:0051966">
    <property type="term" value="P:regulation of synaptic transmission, glutamatergic"/>
    <property type="evidence" value="ECO:0000318"/>
    <property type="project" value="GO_Central"/>
</dbReference>
<dbReference type="GO" id="GO:0060041">
    <property type="term" value="P:retina development in camera-type eye"/>
    <property type="evidence" value="ECO:0000266"/>
    <property type="project" value="RGD"/>
</dbReference>
<dbReference type="GO" id="GO:0050953">
    <property type="term" value="P:sensory perception of light stimulus"/>
    <property type="evidence" value="ECO:0000266"/>
    <property type="project" value="RGD"/>
</dbReference>
<dbReference type="GO" id="GO:0007165">
    <property type="term" value="P:signal transduction"/>
    <property type="evidence" value="ECO:0000266"/>
    <property type="project" value="RGD"/>
</dbReference>
<dbReference type="GO" id="GO:0007416">
    <property type="term" value="P:synapse assembly"/>
    <property type="evidence" value="ECO:0000266"/>
    <property type="project" value="RGD"/>
</dbReference>
<dbReference type="CDD" id="cd06376">
    <property type="entry name" value="PBP1_mGluR_groupIII"/>
    <property type="match status" value="1"/>
</dbReference>
<dbReference type="FunFam" id="3.40.50.2300:FF:000009">
    <property type="entry name" value="Glutamate receptor, metabotropic 4"/>
    <property type="match status" value="1"/>
</dbReference>
<dbReference type="FunFam" id="2.10.50.30:FF:000001">
    <property type="entry name" value="metabotropic glutamate receptor 1"/>
    <property type="match status" value="1"/>
</dbReference>
<dbReference type="Gene3D" id="3.40.50.2300">
    <property type="match status" value="2"/>
</dbReference>
<dbReference type="Gene3D" id="2.10.50.30">
    <property type="entry name" value="GPCR, family 3, nine cysteines domain"/>
    <property type="match status" value="1"/>
</dbReference>
<dbReference type="InterPro" id="IPR001828">
    <property type="entry name" value="ANF_lig-bd_rcpt"/>
</dbReference>
<dbReference type="InterPro" id="IPR000337">
    <property type="entry name" value="GPCR_3"/>
</dbReference>
<dbReference type="InterPro" id="IPR011500">
    <property type="entry name" value="GPCR_3_9-Cys_dom"/>
</dbReference>
<dbReference type="InterPro" id="IPR038550">
    <property type="entry name" value="GPCR_3_9-Cys_sf"/>
</dbReference>
<dbReference type="InterPro" id="IPR000112">
    <property type="entry name" value="GPCR_3__mGluR6"/>
</dbReference>
<dbReference type="InterPro" id="IPR017978">
    <property type="entry name" value="GPCR_3_C"/>
</dbReference>
<dbReference type="InterPro" id="IPR017979">
    <property type="entry name" value="GPCR_3_CS"/>
</dbReference>
<dbReference type="InterPro" id="IPR000162">
    <property type="entry name" value="GPCR_3_mtglu_rcpt"/>
</dbReference>
<dbReference type="InterPro" id="IPR050726">
    <property type="entry name" value="mGluR"/>
</dbReference>
<dbReference type="InterPro" id="IPR028082">
    <property type="entry name" value="Peripla_BP_I"/>
</dbReference>
<dbReference type="PANTHER" id="PTHR24060">
    <property type="entry name" value="METABOTROPIC GLUTAMATE RECEPTOR"/>
    <property type="match status" value="1"/>
</dbReference>
<dbReference type="Pfam" id="PF00003">
    <property type="entry name" value="7tm_3"/>
    <property type="match status" value="1"/>
</dbReference>
<dbReference type="Pfam" id="PF01094">
    <property type="entry name" value="ANF_receptor"/>
    <property type="match status" value="1"/>
</dbReference>
<dbReference type="Pfam" id="PF07562">
    <property type="entry name" value="NCD3G"/>
    <property type="match status" value="1"/>
</dbReference>
<dbReference type="PRINTS" id="PR00248">
    <property type="entry name" value="GPCRMGR"/>
</dbReference>
<dbReference type="PRINTS" id="PR01056">
    <property type="entry name" value="MTABOTROPC6R"/>
</dbReference>
<dbReference type="PRINTS" id="PR00593">
    <property type="entry name" value="MTABOTROPICR"/>
</dbReference>
<dbReference type="SUPFAM" id="SSF53822">
    <property type="entry name" value="Periplasmic binding protein-like I"/>
    <property type="match status" value="1"/>
</dbReference>
<dbReference type="PROSITE" id="PS00979">
    <property type="entry name" value="G_PROTEIN_RECEP_F3_1"/>
    <property type="match status" value="1"/>
</dbReference>
<dbReference type="PROSITE" id="PS00980">
    <property type="entry name" value="G_PROTEIN_RECEP_F3_2"/>
    <property type="match status" value="1"/>
</dbReference>
<dbReference type="PROSITE" id="PS00981">
    <property type="entry name" value="G_PROTEIN_RECEP_F3_3"/>
    <property type="match status" value="1"/>
</dbReference>
<dbReference type="PROSITE" id="PS50259">
    <property type="entry name" value="G_PROTEIN_RECEP_F3_4"/>
    <property type="match status" value="1"/>
</dbReference>
<gene>
    <name type="primary">Grm6</name>
    <name type="synonym">Gprc1f</name>
    <name type="synonym">Mglur6</name>
</gene>
<accession>P35349</accession>
<evidence type="ECO:0000250" key="1"/>
<evidence type="ECO:0000250" key="2">
    <source>
        <dbReference type="UniProtKB" id="O15303"/>
    </source>
</evidence>
<evidence type="ECO:0000250" key="3">
    <source>
        <dbReference type="UniProtKB" id="Q5NCH9"/>
    </source>
</evidence>
<evidence type="ECO:0000255" key="4"/>
<evidence type="ECO:0000256" key="5">
    <source>
        <dbReference type="SAM" id="MobiDB-lite"/>
    </source>
</evidence>
<evidence type="ECO:0000269" key="6">
    <source>
    </source>
</evidence>
<evidence type="ECO:0000305" key="7"/>
<sequence length="871" mass="95089">MGRLPVLLLWLAWWLSQAGIACGAGSVRLAGGLTLGGLFPVHARGAAGRACGALKKEQGVHRLEAMLYALDRVNADPELLPGVRLGARLLDTCSRDTYALEQALSFVQALIRGRGDGDEASVRCPGGVPPLRSAPPERVVAVVGASASSVSIMVANVLRLFAIPQISYASTAPELSDSTRYDFFSRVVPPDSYQAQAMVDIVRALGWNYVSTLASEGNYGESGVEAFVQISREAGGVCIAQSIKIPREPKPGEFHKVIRRLMETPNARGIIIFANEDDIRRVLEATRQANLTGHFLWVGSDSWGSKISPILNLEEEAVGAITILPKRASIDGFDQYFMTRSLENNRRNIWFAEFWEENFNCKLTSSGGQSDDSTRKCTGEERIGQDSAYEQEGKVQFVIDAVYAIAHALHSMHQALCPGHTGLCPAMEPTDGRTLLHYIRAVRFNGSAGTPVMFNENGDAPGRYDIFQYQATNGSASSGGYQAVGQWAEALRLDMEVLRWSGDPHEVPPSQCSLPCGPGERKKMVKGVPCCWHCEACDGYRFQVDEFTCEACPGDMRPTPNHTGCRPTPVVRLTWSSPWAALPLLLAVLGIMATTTIMATFMRHNDTPIVRASGRELSYVLLTGIFLIYAITFLMVAEPCAAICAARRLLLGLGTTLSYSALLTKTNRIYRIFEQGKRSVTPPPFISPTSQLVITFGLTSLQVVGVIAWLGAQPPHSVIDYEEQRTVDPEQARGVLKCDMSDLSLIGCLGYSLLLMVTCTVYAIKARGVPETFNEAKPIGFTMYTTCIIWLAFVPIFFGTAQSAEKIYIQTTTLTVSLSLSASVSLGMLYVPKTYVILFHPEQNVQKRKRSLKKTSTMAAPPQNENAEDAK</sequence>
<feature type="signal peptide" evidence="4">
    <location>
        <begin position="1"/>
        <end position="23"/>
    </location>
</feature>
<feature type="chain" id="PRO_0000012937" description="Metabotropic glutamate receptor 6">
    <location>
        <begin position="24"/>
        <end position="871"/>
    </location>
</feature>
<feature type="topological domain" description="Extracellular" evidence="4">
    <location>
        <begin position="24"/>
        <end position="579"/>
    </location>
</feature>
<feature type="transmembrane region" description="Helical; Name=1" evidence="4">
    <location>
        <begin position="580"/>
        <end position="602"/>
    </location>
</feature>
<feature type="topological domain" description="Cytoplasmic" evidence="4">
    <location>
        <begin position="603"/>
        <end position="616"/>
    </location>
</feature>
<feature type="transmembrane region" description="Helical; Name=2" evidence="4">
    <location>
        <begin position="617"/>
        <end position="637"/>
    </location>
</feature>
<feature type="topological domain" description="Extracellular" evidence="4">
    <location>
        <begin position="638"/>
        <end position="648"/>
    </location>
</feature>
<feature type="transmembrane region" description="Helical; Name=3" evidence="4">
    <location>
        <begin position="649"/>
        <end position="667"/>
    </location>
</feature>
<feature type="topological domain" description="Cytoplasmic" evidence="4">
    <location>
        <begin position="668"/>
        <end position="691"/>
    </location>
</feature>
<feature type="transmembrane region" description="Helical; Name=4" evidence="4">
    <location>
        <begin position="692"/>
        <end position="712"/>
    </location>
</feature>
<feature type="topological domain" description="Extracellular" evidence="4">
    <location>
        <begin position="713"/>
        <end position="742"/>
    </location>
</feature>
<feature type="transmembrane region" description="Helical; Name=5" evidence="4">
    <location>
        <begin position="743"/>
        <end position="764"/>
    </location>
</feature>
<feature type="topological domain" description="Cytoplasmic" evidence="4">
    <location>
        <begin position="765"/>
        <end position="777"/>
    </location>
</feature>
<feature type="transmembrane region" description="Helical; Name=6" evidence="4">
    <location>
        <begin position="778"/>
        <end position="800"/>
    </location>
</feature>
<feature type="topological domain" description="Extracellular" evidence="4">
    <location>
        <begin position="801"/>
        <end position="813"/>
    </location>
</feature>
<feature type="transmembrane region" description="Helical; Name=7" evidence="4">
    <location>
        <begin position="814"/>
        <end position="839"/>
    </location>
</feature>
<feature type="topological domain" description="Cytoplasmic" evidence="4">
    <location>
        <begin position="840"/>
        <end position="871"/>
    </location>
</feature>
<feature type="region of interest" description="Disordered" evidence="5">
    <location>
        <begin position="850"/>
        <end position="871"/>
    </location>
</feature>
<feature type="binding site" evidence="1">
    <location>
        <position position="148"/>
    </location>
    <ligand>
        <name>L-glutamate</name>
        <dbReference type="ChEBI" id="CHEBI:29985"/>
    </ligand>
</feature>
<feature type="binding site" evidence="1">
    <location>
        <begin position="169"/>
        <end position="171"/>
    </location>
    <ligand>
        <name>L-glutamate</name>
        <dbReference type="ChEBI" id="CHEBI:29985"/>
    </ligand>
</feature>
<feature type="binding site" evidence="1">
    <location>
        <position position="219"/>
    </location>
    <ligand>
        <name>L-glutamate</name>
        <dbReference type="ChEBI" id="CHEBI:29985"/>
    </ligand>
</feature>
<feature type="binding site" evidence="1">
    <location>
        <position position="301"/>
    </location>
    <ligand>
        <name>L-glutamate</name>
        <dbReference type="ChEBI" id="CHEBI:29985"/>
    </ligand>
</feature>
<feature type="binding site" evidence="1">
    <location>
        <position position="394"/>
    </location>
    <ligand>
        <name>L-glutamate</name>
        <dbReference type="ChEBI" id="CHEBI:29985"/>
    </ligand>
</feature>
<feature type="glycosylation site" description="N-linked (GlcNAc...) asparagine" evidence="4">
    <location>
        <position position="290"/>
    </location>
</feature>
<feature type="glycosylation site" description="N-linked (GlcNAc...) asparagine" evidence="4">
    <location>
        <position position="445"/>
    </location>
</feature>
<feature type="glycosylation site" description="N-linked (GlcNAc...) asparagine" evidence="4">
    <location>
        <position position="473"/>
    </location>
</feature>
<feature type="glycosylation site" description="N-linked (GlcNAc...) asparagine" evidence="4">
    <location>
        <position position="561"/>
    </location>
</feature>
<feature type="disulfide bond" evidence="1">
    <location>
        <begin position="51"/>
        <end position="93"/>
    </location>
</feature>
<feature type="disulfide bond" evidence="1">
    <location>
        <begin position="238"/>
        <end position="530"/>
    </location>
</feature>
<feature type="disulfide bond" evidence="1">
    <location>
        <begin position="361"/>
        <end position="377"/>
    </location>
</feature>
<feature type="disulfide bond" evidence="1">
    <location>
        <begin position="417"/>
        <end position="424"/>
    </location>
</feature>
<feature type="disulfide bond" evidence="1">
    <location>
        <begin position="512"/>
        <end position="531"/>
    </location>
</feature>
<feature type="disulfide bond" evidence="1">
    <location>
        <begin position="516"/>
        <end position="534"/>
    </location>
</feature>
<feature type="disulfide bond" evidence="1">
    <location>
        <begin position="537"/>
        <end position="549"/>
    </location>
</feature>
<feature type="disulfide bond" evidence="1">
    <location>
        <begin position="552"/>
        <end position="565"/>
    </location>
</feature>
<protein>
    <recommendedName>
        <fullName>Metabotropic glutamate receptor 6</fullName>
        <shortName>mGluR6</shortName>
    </recommendedName>
</protein>
<reference key="1">
    <citation type="journal article" date="1993" name="J. Biol. Chem.">
        <title>Molecular characterization of a novel retinal metabotropic glutamate receptor mGluR6 with a high agonist selectivity for L-2-amino-4-phosphonobutyrate.</title>
        <authorList>
            <person name="Nakajima Y."/>
            <person name="Iwakabe H."/>
            <person name="Akazawa C."/>
            <person name="Nawa H."/>
            <person name="Shigemoto R."/>
            <person name="Nakanishi S."/>
        </authorList>
    </citation>
    <scope>NUCLEOTIDE SEQUENCE [MRNA]</scope>
    <scope>FUNCTION</scope>
    <scope>TISSUE SPECIFICITY</scope>
    <source>
        <strain>Sprague-Dawley</strain>
        <tissue>Retina</tissue>
    </source>
</reference>
<name>GRM6_RAT</name>
<keyword id="KW-1003">Cell membrane</keyword>
<keyword id="KW-0966">Cell projection</keyword>
<keyword id="KW-1015">Disulfide bond</keyword>
<keyword id="KW-0256">Endoplasmic reticulum</keyword>
<keyword id="KW-0297">G-protein coupled receptor</keyword>
<keyword id="KW-0325">Glycoprotein</keyword>
<keyword id="KW-0333">Golgi apparatus</keyword>
<keyword id="KW-0472">Membrane</keyword>
<keyword id="KW-0675">Receptor</keyword>
<keyword id="KW-1185">Reference proteome</keyword>
<keyword id="KW-0716">Sensory transduction</keyword>
<keyword id="KW-0732">Signal</keyword>
<keyword id="KW-0807">Transducer</keyword>
<keyword id="KW-0812">Transmembrane</keyword>
<keyword id="KW-1133">Transmembrane helix</keyword>
<keyword id="KW-0844">Vision</keyword>
<proteinExistence type="evidence at transcript level"/>
<comment type="function">
    <text evidence="1 6">G-protein coupled receptor for glutamate. Ligand binding causes a conformation change that triggers signaling via guanine nucleotide-binding proteins (G proteins) and modulates the activity of down-stream effectors, such as adenylate cyclase. Signaling inhibits adenylate cyclase activity (By similarity). Signaling stimulates TRPM1 channel activity and Ca(2+) uptake. Required for normal vision.</text>
</comment>
<comment type="subunit">
    <text evidence="2 3">Homodimer (By similarity). Interacts with GPR179 (By similarity). Interacts with photoreceptor synaptic protein LRIT1 (via its N-terminal extracellular domain) (By similarity).</text>
</comment>
<comment type="subcellular location">
    <subcellularLocation>
        <location>Cell membrane</location>
        <topology>Multi-pass membrane protein</topology>
    </subcellularLocation>
    <subcellularLocation>
        <location evidence="1">Endoplasmic reticulum membrane</location>
        <topology evidence="1">Multi-pass membrane protein</topology>
    </subcellularLocation>
    <subcellularLocation>
        <location evidence="1">Golgi apparatus membrane</location>
        <topology evidence="1">Multi-pass membrane protein</topology>
    </subcellularLocation>
    <subcellularLocation>
        <location evidence="1">Cell projection</location>
        <location evidence="1">Dendrite</location>
    </subcellularLocation>
    <text evidence="1">Subject to trafficking from the endoplasmic reticulum to the Golgi apparatus and then to the cell membrane. Detected at dendritic tips of bipolar cells (By similarity).</text>
</comment>
<comment type="tissue specificity">
    <text evidence="6">Restricted expression in the inner nuclear layer of the retina.</text>
</comment>
<comment type="similarity">
    <text evidence="7">Belongs to the G-protein coupled receptor 3 family.</text>
</comment>
<organism>
    <name type="scientific">Rattus norvegicus</name>
    <name type="common">Rat</name>
    <dbReference type="NCBI Taxonomy" id="10116"/>
    <lineage>
        <taxon>Eukaryota</taxon>
        <taxon>Metazoa</taxon>
        <taxon>Chordata</taxon>
        <taxon>Craniata</taxon>
        <taxon>Vertebrata</taxon>
        <taxon>Euteleostomi</taxon>
        <taxon>Mammalia</taxon>
        <taxon>Eutheria</taxon>
        <taxon>Euarchontoglires</taxon>
        <taxon>Glires</taxon>
        <taxon>Rodentia</taxon>
        <taxon>Myomorpha</taxon>
        <taxon>Muroidea</taxon>
        <taxon>Muridae</taxon>
        <taxon>Murinae</taxon>
        <taxon>Rattus</taxon>
    </lineage>
</organism>